<proteinExistence type="inferred from homology"/>
<protein>
    <recommendedName>
        <fullName evidence="1">UPF0215 protein YG5714_1960</fullName>
    </recommendedName>
</protein>
<name>Y1960_SACI7</name>
<sequence>MPISGVDDGYFPLSYKGGKGKTALVVVTFYDYEMIDLDWGLITVDGNDATDVLKQLRKGDIVILDGVIFAGFNYIVPYSDNMIFFYSKMPKVDLIKNALMKHFQADTERVREILYVLNNLKQIPTKRGNVFLYSTVELSLAKSIIEKYQIYSKIPEVLKSAHVIASSLGRFLARYKKTV</sequence>
<accession>C3N7M2</accession>
<evidence type="ECO:0000255" key="1">
    <source>
        <dbReference type="HAMAP-Rule" id="MF_00582"/>
    </source>
</evidence>
<reference key="1">
    <citation type="journal article" date="2009" name="Proc. Natl. Acad. Sci. U.S.A.">
        <title>Biogeography of the Sulfolobus islandicus pan-genome.</title>
        <authorList>
            <person name="Reno M.L."/>
            <person name="Held N.L."/>
            <person name="Fields C.J."/>
            <person name="Burke P.V."/>
            <person name="Whitaker R.J."/>
        </authorList>
    </citation>
    <scope>NUCLEOTIDE SEQUENCE [LARGE SCALE GENOMIC DNA]</scope>
    <source>
        <strain>Y.G.57.14 / Yellowstone #1</strain>
    </source>
</reference>
<comment type="similarity">
    <text evidence="1">Belongs to the UPF0215 family.</text>
</comment>
<feature type="chain" id="PRO_1000212138" description="UPF0215 protein YG5714_1960">
    <location>
        <begin position="1"/>
        <end position="179"/>
    </location>
</feature>
<dbReference type="EMBL" id="CP001403">
    <property type="protein sequence ID" value="ACP46216.1"/>
    <property type="molecule type" value="Genomic_DNA"/>
</dbReference>
<dbReference type="RefSeq" id="WP_012714017.1">
    <property type="nucleotide sequence ID" value="NC_012622.1"/>
</dbReference>
<dbReference type="SMR" id="C3N7M2"/>
<dbReference type="KEGG" id="siy:YG5714_1960"/>
<dbReference type="HOGENOM" id="CLU_095956_1_1_2"/>
<dbReference type="Proteomes" id="UP000002308">
    <property type="component" value="Chromosome"/>
</dbReference>
<dbReference type="Gene3D" id="3.30.2170.10">
    <property type="entry name" value="archaeoglobus fulgidus dsm 4304 superfamily"/>
    <property type="match status" value="1"/>
</dbReference>
<dbReference type="HAMAP" id="MF_00582">
    <property type="entry name" value="UPF0215"/>
    <property type="match status" value="1"/>
</dbReference>
<dbReference type="InterPro" id="IPR002802">
    <property type="entry name" value="Endo_dU"/>
</dbReference>
<dbReference type="PANTHER" id="PTHR39518">
    <property type="entry name" value="UPF0215 PROTEIN MJ1150"/>
    <property type="match status" value="1"/>
</dbReference>
<dbReference type="PANTHER" id="PTHR39518:SF2">
    <property type="entry name" value="UPF0215 PROTEIN MJ1150"/>
    <property type="match status" value="1"/>
</dbReference>
<dbReference type="Pfam" id="PF01949">
    <property type="entry name" value="DUF99"/>
    <property type="match status" value="1"/>
</dbReference>
<dbReference type="PIRSF" id="PIRSF006380">
    <property type="entry name" value="UCP006380"/>
    <property type="match status" value="1"/>
</dbReference>
<gene>
    <name type="ordered locus">YG5714_1960</name>
</gene>
<organism>
    <name type="scientific">Saccharolobus islandicus (strain Y.G.57.14 / Yellowstone #1)</name>
    <name type="common">Sulfolobus islandicus</name>
    <dbReference type="NCBI Taxonomy" id="439386"/>
    <lineage>
        <taxon>Archaea</taxon>
        <taxon>Thermoproteota</taxon>
        <taxon>Thermoprotei</taxon>
        <taxon>Sulfolobales</taxon>
        <taxon>Sulfolobaceae</taxon>
        <taxon>Saccharolobus</taxon>
    </lineage>
</organism>